<evidence type="ECO:0000250" key="1"/>
<evidence type="ECO:0000255" key="2"/>
<evidence type="ECO:0000255" key="3">
    <source>
        <dbReference type="PROSITE-ProRule" id="PRU00555"/>
    </source>
</evidence>
<evidence type="ECO:0000305" key="4"/>
<organism>
    <name type="scientific">Aspergillus fumigatus (strain ATCC MYA-4609 / CBS 101355 / FGSC A1100 / Af293)</name>
    <name type="common">Neosartorya fumigata</name>
    <dbReference type="NCBI Taxonomy" id="330879"/>
    <lineage>
        <taxon>Eukaryota</taxon>
        <taxon>Fungi</taxon>
        <taxon>Dikarya</taxon>
        <taxon>Ascomycota</taxon>
        <taxon>Pezizomycotina</taxon>
        <taxon>Eurotiomycetes</taxon>
        <taxon>Eurotiomycetidae</taxon>
        <taxon>Eurotiales</taxon>
        <taxon>Aspergillaceae</taxon>
        <taxon>Aspergillus</taxon>
        <taxon>Aspergillus subgen. Fumigati</taxon>
    </lineage>
</organism>
<reference key="1">
    <citation type="journal article" date="2005" name="Nature">
        <title>Genomic sequence of the pathogenic and allergenic filamentous fungus Aspergillus fumigatus.</title>
        <authorList>
            <person name="Nierman W.C."/>
            <person name="Pain A."/>
            <person name="Anderson M.J."/>
            <person name="Wortman J.R."/>
            <person name="Kim H.S."/>
            <person name="Arroyo J."/>
            <person name="Berriman M."/>
            <person name="Abe K."/>
            <person name="Archer D.B."/>
            <person name="Bermejo C."/>
            <person name="Bennett J.W."/>
            <person name="Bowyer P."/>
            <person name="Chen D."/>
            <person name="Collins M."/>
            <person name="Coulsen R."/>
            <person name="Davies R."/>
            <person name="Dyer P.S."/>
            <person name="Farman M.L."/>
            <person name="Fedorova N."/>
            <person name="Fedorova N.D."/>
            <person name="Feldblyum T.V."/>
            <person name="Fischer R."/>
            <person name="Fosker N."/>
            <person name="Fraser A."/>
            <person name="Garcia J.L."/>
            <person name="Garcia M.J."/>
            <person name="Goble A."/>
            <person name="Goldman G.H."/>
            <person name="Gomi K."/>
            <person name="Griffith-Jones S."/>
            <person name="Gwilliam R."/>
            <person name="Haas B.J."/>
            <person name="Haas H."/>
            <person name="Harris D.E."/>
            <person name="Horiuchi H."/>
            <person name="Huang J."/>
            <person name="Humphray S."/>
            <person name="Jimenez J."/>
            <person name="Keller N."/>
            <person name="Khouri H."/>
            <person name="Kitamoto K."/>
            <person name="Kobayashi T."/>
            <person name="Konzack S."/>
            <person name="Kulkarni R."/>
            <person name="Kumagai T."/>
            <person name="Lafton A."/>
            <person name="Latge J.-P."/>
            <person name="Li W."/>
            <person name="Lord A."/>
            <person name="Lu C."/>
            <person name="Majoros W.H."/>
            <person name="May G.S."/>
            <person name="Miller B.L."/>
            <person name="Mohamoud Y."/>
            <person name="Molina M."/>
            <person name="Monod M."/>
            <person name="Mouyna I."/>
            <person name="Mulligan S."/>
            <person name="Murphy L.D."/>
            <person name="O'Neil S."/>
            <person name="Paulsen I."/>
            <person name="Penalva M.A."/>
            <person name="Pertea M."/>
            <person name="Price C."/>
            <person name="Pritchard B.L."/>
            <person name="Quail M.A."/>
            <person name="Rabbinowitsch E."/>
            <person name="Rawlins N."/>
            <person name="Rajandream M.A."/>
            <person name="Reichard U."/>
            <person name="Renauld H."/>
            <person name="Robson G.D."/>
            <person name="Rodriguez de Cordoba S."/>
            <person name="Rodriguez-Pena J.M."/>
            <person name="Ronning C.M."/>
            <person name="Rutter S."/>
            <person name="Salzberg S.L."/>
            <person name="Sanchez M."/>
            <person name="Sanchez-Ferrero J.C."/>
            <person name="Saunders D."/>
            <person name="Seeger K."/>
            <person name="Squares R."/>
            <person name="Squares S."/>
            <person name="Takeuchi M."/>
            <person name="Tekaia F."/>
            <person name="Turner G."/>
            <person name="Vazquez de Aldana C.R."/>
            <person name="Weidman J."/>
            <person name="White O."/>
            <person name="Woodward J.R."/>
            <person name="Yu J.-H."/>
            <person name="Fraser C.M."/>
            <person name="Galagan J.E."/>
            <person name="Asai K."/>
            <person name="Machida M."/>
            <person name="Hall N."/>
            <person name="Barrell B.G."/>
            <person name="Denning D.W."/>
        </authorList>
    </citation>
    <scope>NUCLEOTIDE SEQUENCE [LARGE SCALE GENOMIC DNA]</scope>
    <source>
        <strain>ATCC MYA-4609 / CBS 101355 / FGSC A1100 / Af293</strain>
    </source>
</reference>
<dbReference type="EC" id="3.1.1.5"/>
<dbReference type="EMBL" id="AAHF01000002">
    <property type="protein sequence ID" value="EAL92119.1"/>
    <property type="molecule type" value="Genomic_DNA"/>
</dbReference>
<dbReference type="RefSeq" id="XP_754157.1">
    <property type="nucleotide sequence ID" value="XM_749064.1"/>
</dbReference>
<dbReference type="SMR" id="P0C958"/>
<dbReference type="FunCoup" id="P0C958">
    <property type="interactions" value="79"/>
</dbReference>
<dbReference type="STRING" id="330879.P0C958"/>
<dbReference type="Allergome" id="8988">
    <property type="allergen name" value="Asp f LPL3"/>
</dbReference>
<dbReference type="GlyCosmos" id="P0C958">
    <property type="glycosylation" value="15 sites, No reported glycans"/>
</dbReference>
<dbReference type="EnsemblFungi" id="EAL92119">
    <property type="protein sequence ID" value="EAL92119"/>
    <property type="gene ID" value="AFUA_3G14680"/>
</dbReference>
<dbReference type="GeneID" id="3512360"/>
<dbReference type="KEGG" id="afm:AFUA_3G14680"/>
<dbReference type="VEuPathDB" id="FungiDB:Afu3g14680"/>
<dbReference type="eggNOG" id="KOG1325">
    <property type="taxonomic scope" value="Eukaryota"/>
</dbReference>
<dbReference type="HOGENOM" id="CLU_014602_0_0_1"/>
<dbReference type="InParanoid" id="P0C958"/>
<dbReference type="OMA" id="FGHINMS"/>
<dbReference type="OrthoDB" id="4084751at2759"/>
<dbReference type="Proteomes" id="UP000002530">
    <property type="component" value="Chromosome 3"/>
</dbReference>
<dbReference type="GO" id="GO:0005829">
    <property type="term" value="C:cytosol"/>
    <property type="evidence" value="ECO:0000318"/>
    <property type="project" value="GO_Central"/>
</dbReference>
<dbReference type="GO" id="GO:0005783">
    <property type="term" value="C:endoplasmic reticulum"/>
    <property type="evidence" value="ECO:0000318"/>
    <property type="project" value="GO_Central"/>
</dbReference>
<dbReference type="GO" id="GO:0005886">
    <property type="term" value="C:plasma membrane"/>
    <property type="evidence" value="ECO:0007669"/>
    <property type="project" value="UniProtKB-SubCell"/>
</dbReference>
<dbReference type="GO" id="GO:0098552">
    <property type="term" value="C:side of membrane"/>
    <property type="evidence" value="ECO:0007669"/>
    <property type="project" value="UniProtKB-KW"/>
</dbReference>
<dbReference type="GO" id="GO:0004622">
    <property type="term" value="F:lysophospholipase activity"/>
    <property type="evidence" value="ECO:0007669"/>
    <property type="project" value="UniProtKB-EC"/>
</dbReference>
<dbReference type="GO" id="GO:0004623">
    <property type="term" value="F:phospholipase A2 activity"/>
    <property type="evidence" value="ECO:0000318"/>
    <property type="project" value="GO_Central"/>
</dbReference>
<dbReference type="GO" id="GO:0046475">
    <property type="term" value="P:glycerophospholipid catabolic process"/>
    <property type="evidence" value="ECO:0000318"/>
    <property type="project" value="GO_Central"/>
</dbReference>
<dbReference type="CDD" id="cd07203">
    <property type="entry name" value="cPLA2_Fungal_PLB"/>
    <property type="match status" value="1"/>
</dbReference>
<dbReference type="FunFam" id="3.40.1090.10:FF:000010">
    <property type="entry name" value="Lysophospholipase"/>
    <property type="match status" value="1"/>
</dbReference>
<dbReference type="Gene3D" id="3.40.1090.10">
    <property type="entry name" value="Cytosolic phospholipase A2 catalytic domain"/>
    <property type="match status" value="1"/>
</dbReference>
<dbReference type="InterPro" id="IPR016035">
    <property type="entry name" value="Acyl_Trfase/lysoPLipase"/>
</dbReference>
<dbReference type="InterPro" id="IPR002642">
    <property type="entry name" value="LysoPLipase_cat_dom"/>
</dbReference>
<dbReference type="PANTHER" id="PTHR10728">
    <property type="entry name" value="CYTOSOLIC PHOSPHOLIPASE A2"/>
    <property type="match status" value="1"/>
</dbReference>
<dbReference type="PANTHER" id="PTHR10728:SF33">
    <property type="entry name" value="LYSOPHOSPHOLIPASE 1-RELATED"/>
    <property type="match status" value="1"/>
</dbReference>
<dbReference type="Pfam" id="PF01735">
    <property type="entry name" value="PLA2_B"/>
    <property type="match status" value="1"/>
</dbReference>
<dbReference type="SMART" id="SM00022">
    <property type="entry name" value="PLAc"/>
    <property type="match status" value="1"/>
</dbReference>
<dbReference type="SUPFAM" id="SSF52151">
    <property type="entry name" value="FabD/lysophospholipase-like"/>
    <property type="match status" value="1"/>
</dbReference>
<dbReference type="PROSITE" id="PS51210">
    <property type="entry name" value="PLA2C"/>
    <property type="match status" value="1"/>
</dbReference>
<accession>P0C958</accession>
<accession>Q4WYY4</accession>
<accession>Q6U819</accession>
<gene>
    <name type="primary">plb3</name>
    <name type="ORF">AFUA_3G14680</name>
</gene>
<sequence>MKALLSLLTAVAVATATPLDLSLRALPNAPDGYTPAKVSCPATRPSIRGAGSLSPNETSWLEIRRKNTVQPMTDLLGRLNLGFDAAGYIDRVSSNASNLPNIAIAVSGGGYRALTNGAGAIKAFDSRTQGSTQSGHLGGLLQSATYVSGLSGGGWLVGSVYLNNFTTIADLQSGDHGNVWQFSTSILEGPKAKHLQFLSTADYWKDLLKAVDGKSDAGFNTSLTDYWGRALSYQFINDRTGNGGLSYTWSSIALTDPFRRGEMPLPILVADGRNPGELLIGSNSTVYEFNPWEFGSFDPSIFGFAPLEYLGSRFDNGQLPRGEPCVRGFDNAGFVMGTSSSLFNQFILRLNKTDLPDLAKDVFSKILTAIGRDGDDIAVYGPNPFYGYRNSTAAYSRSRELDVVDGGEDGQNIPLHPLIQPVRHVDVIFAVDSSADGPYSWPNGSALVATYERSLNSSGIGNGTVFPAVPDVNTFVNLGLNTRPTFFGCDPANLSAPAPLVVYLPNAPYSTHSNTSTFQLAYSDSERDEIITNGYNVVTRGNATVDKSWPSCVGCAILQRSMYRTNTSMPAVCNSCFKEYCWNGTVDSKTPRTYEPTLLLGSTSTNAAYTQGVTWLVGILAVGVAMGMTA</sequence>
<keyword id="KW-1003">Cell membrane</keyword>
<keyword id="KW-0325">Glycoprotein</keyword>
<keyword id="KW-0336">GPI-anchor</keyword>
<keyword id="KW-0378">Hydrolase</keyword>
<keyword id="KW-0442">Lipid degradation</keyword>
<keyword id="KW-0443">Lipid metabolism</keyword>
<keyword id="KW-0449">Lipoprotein</keyword>
<keyword id="KW-0472">Membrane</keyword>
<keyword id="KW-1185">Reference proteome</keyword>
<keyword id="KW-0732">Signal</keyword>
<comment type="function">
    <text>Catalyzes the release of fatty acids from lysophospholipids.</text>
</comment>
<comment type="catalytic activity">
    <reaction>
        <text>a 1-acyl-sn-glycero-3-phosphocholine + H2O = sn-glycerol 3-phosphocholine + a fatty acid + H(+)</text>
        <dbReference type="Rhea" id="RHEA:15177"/>
        <dbReference type="ChEBI" id="CHEBI:15377"/>
        <dbReference type="ChEBI" id="CHEBI:15378"/>
        <dbReference type="ChEBI" id="CHEBI:16870"/>
        <dbReference type="ChEBI" id="CHEBI:28868"/>
        <dbReference type="ChEBI" id="CHEBI:58168"/>
        <dbReference type="EC" id="3.1.1.5"/>
    </reaction>
</comment>
<comment type="subcellular location">
    <subcellularLocation>
        <location evidence="1">Cell membrane</location>
        <topology evidence="1">Lipid-anchor</topology>
        <topology evidence="1">GPI-anchor</topology>
    </subcellularLocation>
</comment>
<comment type="induction">
    <text>Strongly induced by lecithin.</text>
</comment>
<comment type="PTM">
    <text evidence="1">The GPI-like anchor contains a phosphoceramide lipid group.</text>
</comment>
<comment type="similarity">
    <text evidence="4">Belongs to the lysophospholipase family.</text>
</comment>
<name>PLB3_ASPFU</name>
<proteinExistence type="evidence at transcript level"/>
<feature type="signal peptide" evidence="2">
    <location>
        <begin position="1"/>
        <end position="16"/>
    </location>
</feature>
<feature type="chain" id="PRO_0000245558" description="Lysophospholipase 3">
    <location>
        <begin position="17"/>
        <end position="606"/>
    </location>
</feature>
<feature type="propeptide" id="PRO_0000245559" description="Removed in mature form" evidence="2">
    <location>
        <begin position="607"/>
        <end position="630"/>
    </location>
</feature>
<feature type="domain" description="PLA2c" evidence="3">
    <location>
        <begin position="39"/>
        <end position="587"/>
    </location>
</feature>
<feature type="lipid moiety-binding region" description="GPI-like-anchor amidated asparagine" evidence="2">
    <location>
        <position position="606"/>
    </location>
</feature>
<feature type="glycosylation site" description="N-linked (GlcNAc...) asparagine" evidence="2">
    <location>
        <position position="56"/>
    </location>
</feature>
<feature type="glycosylation site" description="N-linked (GlcNAc...) asparagine" evidence="2">
    <location>
        <position position="95"/>
    </location>
</feature>
<feature type="glycosylation site" description="N-linked (GlcNAc...) asparagine" evidence="2">
    <location>
        <position position="164"/>
    </location>
</feature>
<feature type="glycosylation site" description="N-linked (GlcNAc...) asparagine" evidence="2">
    <location>
        <position position="220"/>
    </location>
</feature>
<feature type="glycosylation site" description="N-linked (GlcNAc...) asparagine" evidence="2">
    <location>
        <position position="283"/>
    </location>
</feature>
<feature type="glycosylation site" description="N-linked (GlcNAc...) asparagine" evidence="2">
    <location>
        <position position="351"/>
    </location>
</feature>
<feature type="glycosylation site" description="N-linked (GlcNAc...) asparagine" evidence="2">
    <location>
        <position position="390"/>
    </location>
</feature>
<feature type="glycosylation site" description="N-linked (GlcNAc...) asparagine" evidence="2">
    <location>
        <position position="443"/>
    </location>
</feature>
<feature type="glycosylation site" description="N-linked (GlcNAc...) asparagine" evidence="2">
    <location>
        <position position="456"/>
    </location>
</feature>
<feature type="glycosylation site" description="N-linked (GlcNAc...) asparagine" evidence="2">
    <location>
        <position position="462"/>
    </location>
</feature>
<feature type="glycosylation site" description="N-linked (GlcNAc...) asparagine" evidence="2">
    <location>
        <position position="493"/>
    </location>
</feature>
<feature type="glycosylation site" description="N-linked (GlcNAc...) asparagine" evidence="2">
    <location>
        <position position="514"/>
    </location>
</feature>
<feature type="glycosylation site" description="N-linked (GlcNAc...) asparagine" evidence="2">
    <location>
        <position position="542"/>
    </location>
</feature>
<feature type="glycosylation site" description="N-linked (GlcNAc...) asparagine" evidence="2">
    <location>
        <position position="566"/>
    </location>
</feature>
<feature type="glycosylation site" description="N-linked (GlcNAc...) asparagine" evidence="2">
    <location>
        <position position="583"/>
    </location>
</feature>
<protein>
    <recommendedName>
        <fullName>Lysophospholipase 3</fullName>
        <ecNumber>3.1.1.5</ecNumber>
    </recommendedName>
    <alternativeName>
        <fullName>Phospholipase B 3</fullName>
    </alternativeName>
</protein>